<dbReference type="EMBL" id="AY724283">
    <property type="protein sequence ID" value="AAU21335.1"/>
    <property type="molecule type" value="Genomic_DNA"/>
</dbReference>
<dbReference type="GO" id="GO:0009507">
    <property type="term" value="C:chloroplast"/>
    <property type="evidence" value="ECO:0007669"/>
    <property type="project" value="UniProtKB-SubCell"/>
</dbReference>
<dbReference type="GO" id="GO:0003723">
    <property type="term" value="F:RNA binding"/>
    <property type="evidence" value="ECO:0007669"/>
    <property type="project" value="UniProtKB-KW"/>
</dbReference>
<dbReference type="GO" id="GO:0006397">
    <property type="term" value="P:mRNA processing"/>
    <property type="evidence" value="ECO:0007669"/>
    <property type="project" value="UniProtKB-KW"/>
</dbReference>
<dbReference type="GO" id="GO:0008380">
    <property type="term" value="P:RNA splicing"/>
    <property type="evidence" value="ECO:0007669"/>
    <property type="project" value="UniProtKB-UniRule"/>
</dbReference>
<dbReference type="GO" id="GO:0008033">
    <property type="term" value="P:tRNA processing"/>
    <property type="evidence" value="ECO:0007669"/>
    <property type="project" value="UniProtKB-KW"/>
</dbReference>
<dbReference type="HAMAP" id="MF_01390">
    <property type="entry name" value="MatK"/>
    <property type="match status" value="1"/>
</dbReference>
<dbReference type="InterPro" id="IPR024937">
    <property type="entry name" value="Domain_X"/>
</dbReference>
<dbReference type="InterPro" id="IPR002866">
    <property type="entry name" value="Maturase_MatK"/>
</dbReference>
<dbReference type="InterPro" id="IPR024942">
    <property type="entry name" value="Maturase_MatK_N"/>
</dbReference>
<dbReference type="PANTHER" id="PTHR34811">
    <property type="entry name" value="MATURASE K"/>
    <property type="match status" value="1"/>
</dbReference>
<dbReference type="PANTHER" id="PTHR34811:SF1">
    <property type="entry name" value="MATURASE K"/>
    <property type="match status" value="1"/>
</dbReference>
<dbReference type="Pfam" id="PF01348">
    <property type="entry name" value="Intron_maturas2"/>
    <property type="match status" value="1"/>
</dbReference>
<dbReference type="Pfam" id="PF01824">
    <property type="entry name" value="MatK_N"/>
    <property type="match status" value="1"/>
</dbReference>
<protein>
    <recommendedName>
        <fullName evidence="1">Maturase K</fullName>
    </recommendedName>
    <alternativeName>
        <fullName evidence="1">Intron maturase</fullName>
    </alternativeName>
</protein>
<proteinExistence type="inferred from homology"/>
<accession>Q646R8</accession>
<feature type="chain" id="PRO_0000143348" description="Maturase K">
    <location>
        <begin position="1"/>
        <end position="507"/>
    </location>
</feature>
<comment type="function">
    <text evidence="1">Usually encoded in the trnK tRNA gene intron. Probably assists in splicing its own and other chloroplast group II introns.</text>
</comment>
<comment type="subcellular location">
    <subcellularLocation>
        <location>Plastid</location>
        <location>Chloroplast</location>
    </subcellularLocation>
</comment>
<comment type="similarity">
    <text evidence="1">Belongs to the intron maturase 2 family. MatK subfamily.</text>
</comment>
<sequence>MEKFQIYLELDGSQQHNFLYPLLFREYIYALAQDHGLNRSTISLENGGYDNKSSSLSGKRLITLLYQQIHLSISANDSNPNQFIGHNNNLYSQMILEGFAVIVEIPFSLQLVSFLEGKEMAKSQNFQSIHSIFPFFEDNFSHLNYVLDVLIPHPIRPEILVQTFRYWVKDASSLHLLRFFLHEYFNWNSLITPKKSISGFSTSNPRFFLFLYNSHVYEYEFLFFFLRNQSSHLRLTSSGVLLERIHFYGKVDYFVEVFANGFQDILWLYKDLFMHYVRYQGKAILASKDTPLLMNKWKYYFVNLWQWHFHVWSQPVRAHINHLHKDSINFLGYLSSRRRNPLVVRSQMLENAYLIDNAMKKFETAVPIIPMVESLTKARFCNPLGNPISKPIWADSSDSHIIDRFVRICRNLSHYHSGSSKKKSLYRIKYILRVSCVKSLVRKHKSTVRVFLKRLGSEFFQDFLTEEEHVLSLIFSRASFTWRRLYRGRVWYLDIICINDLVNHDKF</sequence>
<organism>
    <name type="scientific">Cupaniopsis anacardioides</name>
    <name type="common">Carrotwood</name>
    <name type="synonym">Cupania anacardioides</name>
    <dbReference type="NCBI Taxonomy" id="13467"/>
    <lineage>
        <taxon>Eukaryota</taxon>
        <taxon>Viridiplantae</taxon>
        <taxon>Streptophyta</taxon>
        <taxon>Embryophyta</taxon>
        <taxon>Tracheophyta</taxon>
        <taxon>Spermatophyta</taxon>
        <taxon>Magnoliopsida</taxon>
        <taxon>eudicotyledons</taxon>
        <taxon>Gunneridae</taxon>
        <taxon>Pentapetalae</taxon>
        <taxon>rosids</taxon>
        <taxon>malvids</taxon>
        <taxon>Sapindales</taxon>
        <taxon>Sapindaceae</taxon>
        <taxon>Cupaniopsis</taxon>
    </lineage>
</organism>
<evidence type="ECO:0000255" key="1">
    <source>
        <dbReference type="HAMAP-Rule" id="MF_01390"/>
    </source>
</evidence>
<reference key="1">
    <citation type="journal article" date="2005" name="Syst. Bot.">
        <title>Phylogenetic inference in Sapindaceae using plastid matK and rbcL sequences.</title>
        <authorList>
            <person name="Harrington M.G."/>
            <person name="Edwards K.J."/>
            <person name="Johnson S.A."/>
            <person name="Chase M.W."/>
            <person name="Gadek P.A."/>
        </authorList>
        <dbReference type="AGRICOLA" id="IND43726779"/>
    </citation>
    <scope>NUCLEOTIDE SEQUENCE [GENOMIC DNA]</scope>
</reference>
<geneLocation type="chloroplast"/>
<gene>
    <name evidence="1" type="primary">matK</name>
</gene>
<name>MATK_CUPAN</name>
<keyword id="KW-0150">Chloroplast</keyword>
<keyword id="KW-0507">mRNA processing</keyword>
<keyword id="KW-0934">Plastid</keyword>
<keyword id="KW-0694">RNA-binding</keyword>
<keyword id="KW-0819">tRNA processing</keyword>